<keyword id="KW-0067">ATP-binding</keyword>
<keyword id="KW-0963">Cytoplasm</keyword>
<keyword id="KW-0418">Kinase</keyword>
<keyword id="KW-0520">NAD</keyword>
<keyword id="KW-0521">NADP</keyword>
<keyword id="KW-0547">Nucleotide-binding</keyword>
<keyword id="KW-0808">Transferase</keyword>
<organism>
    <name type="scientific">Bacteroides fragilis (strain YCH46)</name>
    <dbReference type="NCBI Taxonomy" id="295405"/>
    <lineage>
        <taxon>Bacteria</taxon>
        <taxon>Pseudomonadati</taxon>
        <taxon>Bacteroidota</taxon>
        <taxon>Bacteroidia</taxon>
        <taxon>Bacteroidales</taxon>
        <taxon>Bacteroidaceae</taxon>
        <taxon>Bacteroides</taxon>
    </lineage>
</organism>
<gene>
    <name evidence="1" type="primary">nadK</name>
    <name type="ordered locus">BF3968</name>
</gene>
<reference key="1">
    <citation type="journal article" date="2004" name="Proc. Natl. Acad. Sci. U.S.A.">
        <title>Genomic analysis of Bacteroides fragilis reveals extensive DNA inversions regulating cell surface adaptation.</title>
        <authorList>
            <person name="Kuwahara T."/>
            <person name="Yamashita A."/>
            <person name="Hirakawa H."/>
            <person name="Nakayama H."/>
            <person name="Toh H."/>
            <person name="Okada N."/>
            <person name="Kuhara S."/>
            <person name="Hattori M."/>
            <person name="Hayashi T."/>
            <person name="Ohnishi Y."/>
        </authorList>
    </citation>
    <scope>NUCLEOTIDE SEQUENCE [LARGE SCALE GENOMIC DNA]</scope>
    <source>
        <strain>YCH46</strain>
    </source>
</reference>
<sequence>MKFAIFGNTYQAKKSSHAATLFKLLEKHGAEICVCREFHRFLKSDLKLNVKADDLFDENNFDADMVISIGGDGTFLKAARRVGNKGIPILGINTGRLGFLADVSPEEMEETIEEVYQNHYTVEERSVLQLLCDDKHLQNSPYALNEIAILKRDSSSMISIRTAINGAHLTTYQADGLIIATPTGSTAYSLSVGGPIIVPHSKTIAITPVAPHSLNVRPIVICDDWEITLDVESRSHNFLVAIDGSSETCKETTRLTIRRADYSIKVVKRFYHIFFDTLRTKMMWGADSRV</sequence>
<proteinExistence type="inferred from homology"/>
<protein>
    <recommendedName>
        <fullName evidence="1">NAD kinase</fullName>
        <ecNumber evidence="1">2.7.1.23</ecNumber>
    </recommendedName>
    <alternativeName>
        <fullName evidence="1">ATP-dependent NAD kinase</fullName>
    </alternativeName>
</protein>
<dbReference type="EC" id="2.7.1.23" evidence="1"/>
<dbReference type="EMBL" id="AP006841">
    <property type="protein sequence ID" value="BAD50710.1"/>
    <property type="molecule type" value="Genomic_DNA"/>
</dbReference>
<dbReference type="RefSeq" id="WP_011203537.1">
    <property type="nucleotide sequence ID" value="NC_006347.1"/>
</dbReference>
<dbReference type="RefSeq" id="YP_101244.1">
    <property type="nucleotide sequence ID" value="NC_006347.1"/>
</dbReference>
<dbReference type="SMR" id="Q64P72"/>
<dbReference type="STRING" id="295405.BF3968"/>
<dbReference type="KEGG" id="bfr:BF3968"/>
<dbReference type="PATRIC" id="fig|295405.11.peg.3814"/>
<dbReference type="HOGENOM" id="CLU_008831_0_3_10"/>
<dbReference type="OrthoDB" id="9774737at2"/>
<dbReference type="Proteomes" id="UP000002197">
    <property type="component" value="Chromosome"/>
</dbReference>
<dbReference type="GO" id="GO:0005737">
    <property type="term" value="C:cytoplasm"/>
    <property type="evidence" value="ECO:0007669"/>
    <property type="project" value="UniProtKB-SubCell"/>
</dbReference>
<dbReference type="GO" id="GO:0005524">
    <property type="term" value="F:ATP binding"/>
    <property type="evidence" value="ECO:0007669"/>
    <property type="project" value="UniProtKB-KW"/>
</dbReference>
<dbReference type="GO" id="GO:0046872">
    <property type="term" value="F:metal ion binding"/>
    <property type="evidence" value="ECO:0007669"/>
    <property type="project" value="UniProtKB-UniRule"/>
</dbReference>
<dbReference type="GO" id="GO:0051287">
    <property type="term" value="F:NAD binding"/>
    <property type="evidence" value="ECO:0007669"/>
    <property type="project" value="UniProtKB-ARBA"/>
</dbReference>
<dbReference type="GO" id="GO:0003951">
    <property type="term" value="F:NAD+ kinase activity"/>
    <property type="evidence" value="ECO:0007669"/>
    <property type="project" value="UniProtKB-UniRule"/>
</dbReference>
<dbReference type="GO" id="GO:0019674">
    <property type="term" value="P:NAD metabolic process"/>
    <property type="evidence" value="ECO:0007669"/>
    <property type="project" value="InterPro"/>
</dbReference>
<dbReference type="GO" id="GO:0006741">
    <property type="term" value="P:NADP biosynthetic process"/>
    <property type="evidence" value="ECO:0007669"/>
    <property type="project" value="UniProtKB-UniRule"/>
</dbReference>
<dbReference type="FunFam" id="2.60.200.30:FF:000013">
    <property type="entry name" value="NAD kinase"/>
    <property type="match status" value="1"/>
</dbReference>
<dbReference type="Gene3D" id="3.40.50.10330">
    <property type="entry name" value="Probable inorganic polyphosphate/atp-NAD kinase, domain 1"/>
    <property type="match status" value="1"/>
</dbReference>
<dbReference type="Gene3D" id="2.60.200.30">
    <property type="entry name" value="Probable inorganic polyphosphate/atp-NAD kinase, domain 2"/>
    <property type="match status" value="1"/>
</dbReference>
<dbReference type="HAMAP" id="MF_00361">
    <property type="entry name" value="NAD_kinase"/>
    <property type="match status" value="1"/>
</dbReference>
<dbReference type="InterPro" id="IPR017438">
    <property type="entry name" value="ATP-NAD_kinase_N"/>
</dbReference>
<dbReference type="InterPro" id="IPR017437">
    <property type="entry name" value="ATP-NAD_kinase_PpnK-typ_C"/>
</dbReference>
<dbReference type="InterPro" id="IPR016064">
    <property type="entry name" value="NAD/diacylglycerol_kinase_sf"/>
</dbReference>
<dbReference type="InterPro" id="IPR002504">
    <property type="entry name" value="NADK"/>
</dbReference>
<dbReference type="NCBIfam" id="NF002521">
    <property type="entry name" value="PRK01911.1"/>
    <property type="match status" value="1"/>
</dbReference>
<dbReference type="PANTHER" id="PTHR20275">
    <property type="entry name" value="NAD KINASE"/>
    <property type="match status" value="1"/>
</dbReference>
<dbReference type="PANTHER" id="PTHR20275:SF0">
    <property type="entry name" value="NAD KINASE"/>
    <property type="match status" value="1"/>
</dbReference>
<dbReference type="Pfam" id="PF01513">
    <property type="entry name" value="NAD_kinase"/>
    <property type="match status" value="1"/>
</dbReference>
<dbReference type="Pfam" id="PF20143">
    <property type="entry name" value="NAD_kinase_C"/>
    <property type="match status" value="1"/>
</dbReference>
<dbReference type="SUPFAM" id="SSF111331">
    <property type="entry name" value="NAD kinase/diacylglycerol kinase-like"/>
    <property type="match status" value="1"/>
</dbReference>
<feature type="chain" id="PRO_0000229608" description="NAD kinase">
    <location>
        <begin position="1"/>
        <end position="290"/>
    </location>
</feature>
<feature type="active site" description="Proton acceptor" evidence="1">
    <location>
        <position position="72"/>
    </location>
</feature>
<feature type="binding site" evidence="1">
    <location>
        <begin position="72"/>
        <end position="73"/>
    </location>
    <ligand>
        <name>NAD(+)</name>
        <dbReference type="ChEBI" id="CHEBI:57540"/>
    </ligand>
</feature>
<feature type="binding site" evidence="1">
    <location>
        <position position="77"/>
    </location>
    <ligand>
        <name>NAD(+)</name>
        <dbReference type="ChEBI" id="CHEBI:57540"/>
    </ligand>
</feature>
<feature type="binding site" evidence="1">
    <location>
        <begin position="145"/>
        <end position="146"/>
    </location>
    <ligand>
        <name>NAD(+)</name>
        <dbReference type="ChEBI" id="CHEBI:57540"/>
    </ligand>
</feature>
<feature type="binding site" evidence="1">
    <location>
        <position position="175"/>
    </location>
    <ligand>
        <name>NAD(+)</name>
        <dbReference type="ChEBI" id="CHEBI:57540"/>
    </ligand>
</feature>
<feature type="binding site" evidence="1">
    <location>
        <begin position="186"/>
        <end position="191"/>
    </location>
    <ligand>
        <name>NAD(+)</name>
        <dbReference type="ChEBI" id="CHEBI:57540"/>
    </ligand>
</feature>
<feature type="binding site" evidence="1">
    <location>
        <position position="210"/>
    </location>
    <ligand>
        <name>NAD(+)</name>
        <dbReference type="ChEBI" id="CHEBI:57540"/>
    </ligand>
</feature>
<comment type="function">
    <text evidence="1">Involved in the regulation of the intracellular balance of NAD and NADP, and is a key enzyme in the biosynthesis of NADP. Catalyzes specifically the phosphorylation on 2'-hydroxyl of the adenosine moiety of NAD to yield NADP.</text>
</comment>
<comment type="catalytic activity">
    <reaction evidence="1">
        <text>NAD(+) + ATP = ADP + NADP(+) + H(+)</text>
        <dbReference type="Rhea" id="RHEA:18629"/>
        <dbReference type="ChEBI" id="CHEBI:15378"/>
        <dbReference type="ChEBI" id="CHEBI:30616"/>
        <dbReference type="ChEBI" id="CHEBI:57540"/>
        <dbReference type="ChEBI" id="CHEBI:58349"/>
        <dbReference type="ChEBI" id="CHEBI:456216"/>
        <dbReference type="EC" id="2.7.1.23"/>
    </reaction>
</comment>
<comment type="cofactor">
    <cofactor evidence="1">
        <name>a divalent metal cation</name>
        <dbReference type="ChEBI" id="CHEBI:60240"/>
    </cofactor>
</comment>
<comment type="subcellular location">
    <subcellularLocation>
        <location evidence="1">Cytoplasm</location>
    </subcellularLocation>
</comment>
<comment type="similarity">
    <text evidence="1">Belongs to the NAD kinase family.</text>
</comment>
<name>NADK_BACFR</name>
<evidence type="ECO:0000255" key="1">
    <source>
        <dbReference type="HAMAP-Rule" id="MF_00361"/>
    </source>
</evidence>
<accession>Q64P72</accession>